<organism>
    <name type="scientific">Helicobacter pylori (strain ATCC 700392 / 26695)</name>
    <name type="common">Campylobacter pylori</name>
    <dbReference type="NCBI Taxonomy" id="85962"/>
    <lineage>
        <taxon>Bacteria</taxon>
        <taxon>Pseudomonadati</taxon>
        <taxon>Campylobacterota</taxon>
        <taxon>Epsilonproteobacteria</taxon>
        <taxon>Campylobacterales</taxon>
        <taxon>Helicobacteraceae</taxon>
        <taxon>Helicobacter</taxon>
    </lineage>
</organism>
<keyword id="KW-0378">Hydrolase</keyword>
<keyword id="KW-0479">Metal-binding</keyword>
<keyword id="KW-1185">Reference proteome</keyword>
<sequence>MLISIAFLLVLYLLNYSSFRMLKSFLTLKKISQYAYLWFFILLSIGEAAFVFYRNIMPSHLFVLTSACSFVSFIIFILSLSFYGFSYSIEKIDFLHSRRKSLKNFLKLGFYLALLGYFWRGFYEGLARPKIKETPIYLDKLDKELKIILLTDMHVGSLLQKDFVDYIVEEVNQKEVDMVLIGGDLVDESIEKVKSFLLPLNNLKSTHGTFYVPGNHEYYHGIEPILSFLDTLNLTILGNECVHLGGINLCGVYDYFARKRQNFAPDIDKALKKRNESKPTILLAHQPKQIRSLKESHSVDLVLSGHTHAGQIFPFSLLVKLAQTYLHGLYKHSPTTQIYVSSGAGYWGIPLRFLAPSEIAYLRLLPKNQA</sequence>
<protein>
    <recommendedName>
        <fullName>Uncharacterized metallophosphoesterase HP_1044</fullName>
        <ecNumber>3.1.-.-</ecNumber>
    </recommendedName>
</protein>
<feature type="chain" id="PRO_0000172855" description="Uncharacterized metallophosphoesterase HP_1044">
    <location>
        <begin position="1"/>
        <end position="370"/>
    </location>
</feature>
<feature type="binding site" evidence="1">
    <location>
        <position position="152"/>
    </location>
    <ligand>
        <name>a divalent metal cation</name>
        <dbReference type="ChEBI" id="CHEBI:60240"/>
        <label>1</label>
    </ligand>
</feature>
<feature type="binding site" evidence="1">
    <location>
        <position position="154"/>
    </location>
    <ligand>
        <name>a divalent metal cation</name>
        <dbReference type="ChEBI" id="CHEBI:60240"/>
        <label>1</label>
    </ligand>
</feature>
<feature type="binding site" evidence="1">
    <location>
        <position position="184"/>
    </location>
    <ligand>
        <name>a divalent metal cation</name>
        <dbReference type="ChEBI" id="CHEBI:60240"/>
        <label>1</label>
    </ligand>
</feature>
<feature type="binding site" evidence="1">
    <location>
        <position position="184"/>
    </location>
    <ligand>
        <name>a divalent metal cation</name>
        <dbReference type="ChEBI" id="CHEBI:60240"/>
        <label>2</label>
    </ligand>
</feature>
<feature type="binding site" evidence="1">
    <location>
        <position position="215"/>
    </location>
    <ligand>
        <name>a divalent metal cation</name>
        <dbReference type="ChEBI" id="CHEBI:60240"/>
        <label>2</label>
    </ligand>
</feature>
<feature type="binding site" evidence="1">
    <location>
        <position position="306"/>
    </location>
    <ligand>
        <name>a divalent metal cation</name>
        <dbReference type="ChEBI" id="CHEBI:60240"/>
        <label>2</label>
    </ligand>
</feature>
<feature type="binding site" evidence="1">
    <location>
        <position position="308"/>
    </location>
    <ligand>
        <name>a divalent metal cation</name>
        <dbReference type="ChEBI" id="CHEBI:60240"/>
        <label>1</label>
    </ligand>
</feature>
<evidence type="ECO:0000250" key="1"/>
<evidence type="ECO:0000305" key="2"/>
<proteinExistence type="inferred from homology"/>
<dbReference type="EC" id="3.1.-.-"/>
<dbReference type="EMBL" id="AE000511">
    <property type="protein sequence ID" value="AAD08089.1"/>
    <property type="molecule type" value="Genomic_DNA"/>
</dbReference>
<dbReference type="PIR" id="D64650">
    <property type="entry name" value="D64650"/>
</dbReference>
<dbReference type="RefSeq" id="NP_207834.1">
    <property type="nucleotide sequence ID" value="NC_000915.1"/>
</dbReference>
<dbReference type="RefSeq" id="WP_000908758.1">
    <property type="nucleotide sequence ID" value="NC_018939.1"/>
</dbReference>
<dbReference type="SMR" id="O25685"/>
<dbReference type="STRING" id="85962.HP_1044"/>
<dbReference type="PaxDb" id="85962-C694_05400"/>
<dbReference type="DNASU" id="899579"/>
<dbReference type="EnsemblBacteria" id="AAD08089">
    <property type="protein sequence ID" value="AAD08089"/>
    <property type="gene ID" value="HP_1044"/>
</dbReference>
<dbReference type="KEGG" id="heo:C694_05400"/>
<dbReference type="KEGG" id="hpy:HP_1044"/>
<dbReference type="PATRIC" id="fig|85962.47.peg.1123"/>
<dbReference type="eggNOG" id="COG1408">
    <property type="taxonomic scope" value="Bacteria"/>
</dbReference>
<dbReference type="InParanoid" id="O25685"/>
<dbReference type="OrthoDB" id="9780884at2"/>
<dbReference type="PhylomeDB" id="O25685"/>
<dbReference type="Proteomes" id="UP000000429">
    <property type="component" value="Chromosome"/>
</dbReference>
<dbReference type="GO" id="GO:0016020">
    <property type="term" value="C:membrane"/>
    <property type="evidence" value="ECO:0007669"/>
    <property type="project" value="GOC"/>
</dbReference>
<dbReference type="GO" id="GO:0046872">
    <property type="term" value="F:metal ion binding"/>
    <property type="evidence" value="ECO:0007669"/>
    <property type="project" value="UniProtKB-KW"/>
</dbReference>
<dbReference type="GO" id="GO:0008758">
    <property type="term" value="F:UDP-2,3-diacylglucosamine hydrolase activity"/>
    <property type="evidence" value="ECO:0000318"/>
    <property type="project" value="GO_Central"/>
</dbReference>
<dbReference type="GO" id="GO:0009245">
    <property type="term" value="P:lipid A biosynthetic process"/>
    <property type="evidence" value="ECO:0000318"/>
    <property type="project" value="GO_Central"/>
</dbReference>
<dbReference type="CDD" id="cd07385">
    <property type="entry name" value="MPP_YkuE_C"/>
    <property type="match status" value="1"/>
</dbReference>
<dbReference type="FunFam" id="3.60.21.10:FF:000028">
    <property type="entry name" value="Putative metallophosphoesterase"/>
    <property type="match status" value="1"/>
</dbReference>
<dbReference type="Gene3D" id="3.60.21.10">
    <property type="match status" value="1"/>
</dbReference>
<dbReference type="InterPro" id="IPR004843">
    <property type="entry name" value="Calcineurin-like_PHP_ApaH"/>
</dbReference>
<dbReference type="InterPro" id="IPR029052">
    <property type="entry name" value="Metallo-depent_PP-like"/>
</dbReference>
<dbReference type="InterPro" id="IPR051158">
    <property type="entry name" value="Metallophosphoesterase_sf"/>
</dbReference>
<dbReference type="PANTHER" id="PTHR31302:SF31">
    <property type="entry name" value="PHOSPHODIESTERASE YAEI"/>
    <property type="match status" value="1"/>
</dbReference>
<dbReference type="PANTHER" id="PTHR31302">
    <property type="entry name" value="TRANSMEMBRANE PROTEIN WITH METALLOPHOSPHOESTERASE DOMAIN-RELATED"/>
    <property type="match status" value="1"/>
</dbReference>
<dbReference type="Pfam" id="PF00149">
    <property type="entry name" value="Metallophos"/>
    <property type="match status" value="1"/>
</dbReference>
<dbReference type="SUPFAM" id="SSF56300">
    <property type="entry name" value="Metallo-dependent phosphatases"/>
    <property type="match status" value="1"/>
</dbReference>
<reference key="1">
    <citation type="journal article" date="1997" name="Nature">
        <title>The complete genome sequence of the gastric pathogen Helicobacter pylori.</title>
        <authorList>
            <person name="Tomb J.-F."/>
            <person name="White O."/>
            <person name="Kerlavage A.R."/>
            <person name="Clayton R.A."/>
            <person name="Sutton G.G."/>
            <person name="Fleischmann R.D."/>
            <person name="Ketchum K.A."/>
            <person name="Klenk H.-P."/>
            <person name="Gill S.R."/>
            <person name="Dougherty B.A."/>
            <person name="Nelson K.E."/>
            <person name="Quackenbush J."/>
            <person name="Zhou L."/>
            <person name="Kirkness E.F."/>
            <person name="Peterson S.N."/>
            <person name="Loftus B.J."/>
            <person name="Richardson D.L."/>
            <person name="Dodson R.J."/>
            <person name="Khalak H.G."/>
            <person name="Glodek A."/>
            <person name="McKenney K."/>
            <person name="FitzGerald L.M."/>
            <person name="Lee N."/>
            <person name="Adams M.D."/>
            <person name="Hickey E.K."/>
            <person name="Berg D.E."/>
            <person name="Gocayne J.D."/>
            <person name="Utterback T.R."/>
            <person name="Peterson J.D."/>
            <person name="Kelley J.M."/>
            <person name="Cotton M.D."/>
            <person name="Weidman J.F."/>
            <person name="Fujii C."/>
            <person name="Bowman C."/>
            <person name="Watthey L."/>
            <person name="Wallin E."/>
            <person name="Hayes W.S."/>
            <person name="Borodovsky M."/>
            <person name="Karp P.D."/>
            <person name="Smith H.O."/>
            <person name="Fraser C.M."/>
            <person name="Venter J.C."/>
        </authorList>
    </citation>
    <scope>NUCLEOTIDE SEQUENCE [LARGE SCALE GENOMIC DNA]</scope>
    <source>
        <strain>ATCC 700392 / 26695</strain>
    </source>
</reference>
<accession>O25685</accession>
<comment type="cofactor">
    <cofactor evidence="1">
        <name>a divalent metal cation</name>
        <dbReference type="ChEBI" id="CHEBI:60240"/>
    </cofactor>
    <text evidence="1">Binds 2 divalent metal cations.</text>
</comment>
<comment type="similarity">
    <text evidence="2">Belongs to the metallophosphoesterase superfamily.</text>
</comment>
<gene>
    <name type="ordered locus">HP_1044</name>
</gene>
<name>Y1044_HELPY</name>